<feature type="chain" id="PRO_0000432244" description="4-hydroxyproline 2-epimerase">
    <location>
        <begin position="1"/>
        <end position="308"/>
    </location>
</feature>
<feature type="active site" description="Proton acceptor" evidence="1">
    <location>
        <position position="88"/>
    </location>
</feature>
<feature type="active site" description="Proton donor" evidence="1">
    <location>
        <position position="236"/>
    </location>
</feature>
<feature type="binding site" evidence="1">
    <location>
        <begin position="89"/>
        <end position="90"/>
    </location>
    <ligand>
        <name>substrate</name>
    </ligand>
</feature>
<feature type="binding site" evidence="1">
    <location>
        <position position="208"/>
    </location>
    <ligand>
        <name>substrate</name>
    </ligand>
</feature>
<feature type="binding site" evidence="1">
    <location>
        <position position="232"/>
    </location>
    <ligand>
        <name>substrate</name>
    </ligand>
</feature>
<feature type="binding site" evidence="1">
    <location>
        <begin position="237"/>
        <end position="238"/>
    </location>
    <ligand>
        <name>substrate</name>
    </ligand>
</feature>
<feature type="strand" evidence="6">
    <location>
        <begin position="2"/>
        <end position="11"/>
    </location>
</feature>
<feature type="strand" evidence="6">
    <location>
        <begin position="14"/>
        <end position="21"/>
    </location>
</feature>
<feature type="helix" evidence="6">
    <location>
        <begin position="31"/>
        <end position="41"/>
    </location>
</feature>
<feature type="helix" evidence="6">
    <location>
        <begin position="43"/>
        <end position="50"/>
    </location>
</feature>
<feature type="turn" evidence="6">
    <location>
        <begin position="52"/>
        <end position="54"/>
    </location>
</feature>
<feature type="strand" evidence="6">
    <location>
        <begin position="60"/>
        <end position="65"/>
    </location>
</feature>
<feature type="strand" evidence="6">
    <location>
        <begin position="73"/>
        <end position="79"/>
    </location>
</feature>
<feature type="strand" evidence="6">
    <location>
        <begin position="81"/>
        <end position="84"/>
    </location>
</feature>
<feature type="helix" evidence="6">
    <location>
        <begin position="89"/>
        <end position="101"/>
    </location>
</feature>
<feature type="strand" evidence="6">
    <location>
        <begin position="107"/>
        <end position="114"/>
    </location>
</feature>
<feature type="strand" evidence="6">
    <location>
        <begin position="117"/>
        <end position="123"/>
    </location>
</feature>
<feature type="strand" evidence="6">
    <location>
        <begin position="129"/>
        <end position="132"/>
    </location>
</feature>
<feature type="strand" evidence="6">
    <location>
        <begin position="136"/>
        <end position="147"/>
    </location>
</feature>
<feature type="turn" evidence="6">
    <location>
        <begin position="148"/>
        <end position="150"/>
    </location>
</feature>
<feature type="strand" evidence="6">
    <location>
        <begin position="151"/>
        <end position="168"/>
    </location>
</feature>
<feature type="strand" evidence="7">
    <location>
        <begin position="170"/>
        <end position="172"/>
    </location>
</feature>
<feature type="helix" evidence="6">
    <location>
        <begin position="176"/>
        <end position="178"/>
    </location>
</feature>
<feature type="helix" evidence="6">
    <location>
        <begin position="179"/>
        <end position="195"/>
    </location>
</feature>
<feature type="helix" evidence="6">
    <location>
        <begin position="201"/>
        <end position="203"/>
    </location>
</feature>
<feature type="strand" evidence="6">
    <location>
        <begin position="208"/>
        <end position="215"/>
    </location>
</feature>
<feature type="strand" evidence="6">
    <location>
        <begin position="218"/>
        <end position="226"/>
    </location>
</feature>
<feature type="turn" evidence="6">
    <location>
        <begin position="227"/>
        <end position="229"/>
    </location>
</feature>
<feature type="helix" evidence="6">
    <location>
        <begin position="237"/>
        <end position="249"/>
    </location>
</feature>
<feature type="strand" evidence="6">
    <location>
        <begin position="259"/>
        <end position="262"/>
    </location>
</feature>
<feature type="strand" evidence="6">
    <location>
        <begin position="268"/>
        <end position="276"/>
    </location>
</feature>
<feature type="strand" evidence="6">
    <location>
        <begin position="279"/>
        <end position="286"/>
    </location>
</feature>
<feature type="strand" evidence="6">
    <location>
        <begin position="288"/>
        <end position="298"/>
    </location>
</feature>
<feature type="turn" evidence="6">
    <location>
        <begin position="303"/>
        <end position="306"/>
    </location>
</feature>
<sequence length="308" mass="33572">MKQIHVIDSHTGGEPTRLVMKGFPQLHGRSMAEQRDELRELHDRWRRACLLEPRGNDVLVGALYCPPVSADATCGVIFFNNAGYLNMCGHGTIGLVASLQHLGLIAPGVHKIDTPVGQVSATLHEDGAITVANVPSYRYRQHVAVNVPGHGVVHGDIAWGGNWFFLVAEHGQRIELDNREVLTEYTWAMLKALEAQGITGENGAPIDHVELFADDPNADSRNFVMCPGKAYDRSPCGTGTSAKLACLAADGTLAEGQTWVQASITGSQFHGRYERDGERIRPFITGRAHMTADSTLLIDEQDPFAWGI</sequence>
<evidence type="ECO:0000250" key="1">
    <source>
        <dbReference type="UniProtKB" id="Q4KGU2"/>
    </source>
</evidence>
<evidence type="ECO:0000269" key="2">
    <source>
    </source>
</evidence>
<evidence type="ECO:0000303" key="3">
    <source>
    </source>
</evidence>
<evidence type="ECO:0000305" key="4"/>
<evidence type="ECO:0000312" key="5">
    <source>
        <dbReference type="EMBL" id="ABQ77446.1"/>
    </source>
</evidence>
<evidence type="ECO:0007829" key="6">
    <source>
        <dbReference type="PDB" id="4JBD"/>
    </source>
</evidence>
<evidence type="ECO:0007829" key="7">
    <source>
        <dbReference type="PDB" id="4JD7"/>
    </source>
</evidence>
<comment type="function">
    <text evidence="2">Catalyzes the epimerization of trans-4-hydroxy-L-proline (t4LHyp) to cis-4-hydroxy-D-proline (c4DHyp). Is likely involved in a degradation pathway that converts t4LHyp to alpha-ketoglutarate. Can also catalyze the epimerization of trans-3-hydroxy-L-proline (t3LHyp) to cis-3-hydroxy-D-proline (c3DHyp), albeit with 200-fold lower efficiency.</text>
</comment>
<comment type="catalytic activity">
    <reaction evidence="2">
        <text>trans-4-hydroxy-L-proline = cis-4-hydroxy-D-proline</text>
        <dbReference type="Rhea" id="RHEA:21152"/>
        <dbReference type="ChEBI" id="CHEBI:57690"/>
        <dbReference type="ChEBI" id="CHEBI:58375"/>
        <dbReference type="EC" id="5.1.1.8"/>
    </reaction>
</comment>
<comment type="biophysicochemical properties">
    <kinetics>
        <KM evidence="2">0.54 mM for trans-4-hydroxy-L-proline</KM>
        <KM evidence="2">19 mM for trans-3-hydroxy-L-proline</KM>
        <KM evidence="2">200 mM for L-proline</KM>
        <text evidence="2">kcat is 26 sec(-1) for t4LHyp epimerization. kcat is 4.8 sec(-1) for t3LHyp epimerization. kcat is 2.8 sec(-1) for L-proline racemization.</text>
    </kinetics>
</comment>
<comment type="similarity">
    <text evidence="4">Belongs to the proline racemase family.</text>
</comment>
<protein>
    <recommendedName>
        <fullName evidence="3">4-hydroxyproline 2-epimerase</fullName>
        <shortName>4Hyp 2-epimerase</shortName>
        <shortName evidence="3">4HypE</shortName>
        <ecNumber evidence="2">5.1.1.8</ecNumber>
    </recommendedName>
</protein>
<gene>
    <name evidence="5" type="ordered locus">Pput_1285</name>
</gene>
<accession>A5VZY6</accession>
<proteinExistence type="evidence at protein level"/>
<organism>
    <name type="scientific">Pseudomonas putida (strain ATCC 700007 / DSM 6899 / JCM 31910 / BCRC 17059 / LMG 24140 / F1)</name>
    <dbReference type="NCBI Taxonomy" id="351746"/>
    <lineage>
        <taxon>Bacteria</taxon>
        <taxon>Pseudomonadati</taxon>
        <taxon>Pseudomonadota</taxon>
        <taxon>Gammaproteobacteria</taxon>
        <taxon>Pseudomonadales</taxon>
        <taxon>Pseudomonadaceae</taxon>
        <taxon>Pseudomonas</taxon>
    </lineage>
</organism>
<keyword id="KW-0002">3D-structure</keyword>
<keyword id="KW-0413">Isomerase</keyword>
<name>4HYPE_PSEP1</name>
<dbReference type="EC" id="5.1.1.8" evidence="2"/>
<dbReference type="EMBL" id="CP000712">
    <property type="protein sequence ID" value="ABQ77446.1"/>
    <property type="molecule type" value="Genomic_DNA"/>
</dbReference>
<dbReference type="PDB" id="4JBD">
    <property type="method" value="X-ray"/>
    <property type="resolution" value="1.30 A"/>
    <property type="chains" value="A=1-308"/>
</dbReference>
<dbReference type="PDB" id="4JD7">
    <property type="method" value="X-ray"/>
    <property type="resolution" value="1.50 A"/>
    <property type="chains" value="A/D=1-308"/>
</dbReference>
<dbReference type="PDBsum" id="4JBD"/>
<dbReference type="PDBsum" id="4JD7"/>
<dbReference type="SMR" id="A5VZY6"/>
<dbReference type="KEGG" id="ppf:Pput_1285"/>
<dbReference type="eggNOG" id="COG3938">
    <property type="taxonomic scope" value="Bacteria"/>
</dbReference>
<dbReference type="HOGENOM" id="CLU_036729_1_0_6"/>
<dbReference type="SABIO-RK" id="A5VZY6"/>
<dbReference type="EvolutionaryTrace" id="A5VZY6"/>
<dbReference type="GO" id="GO:0047580">
    <property type="term" value="F:4-hydroxyproline epimerase activity"/>
    <property type="evidence" value="ECO:0000314"/>
    <property type="project" value="CACAO"/>
</dbReference>
<dbReference type="FunFam" id="3.10.310.10:FF:000012">
    <property type="entry name" value="4-hydroxyproline 2-epimerase"/>
    <property type="match status" value="1"/>
</dbReference>
<dbReference type="Gene3D" id="3.10.310.10">
    <property type="entry name" value="Diaminopimelate Epimerase, Chain A, domain 1"/>
    <property type="match status" value="2"/>
</dbReference>
<dbReference type="InterPro" id="IPR008794">
    <property type="entry name" value="Pro_racemase_fam"/>
</dbReference>
<dbReference type="NCBIfam" id="NF010577">
    <property type="entry name" value="PRK13970.1"/>
    <property type="match status" value="1"/>
</dbReference>
<dbReference type="PANTHER" id="PTHR33442">
    <property type="entry name" value="TRANS-3-HYDROXY-L-PROLINE DEHYDRATASE"/>
    <property type="match status" value="1"/>
</dbReference>
<dbReference type="PANTHER" id="PTHR33442:SF1">
    <property type="entry name" value="TRANS-3-HYDROXY-L-PROLINE DEHYDRATASE"/>
    <property type="match status" value="1"/>
</dbReference>
<dbReference type="Pfam" id="PF05544">
    <property type="entry name" value="Pro_racemase"/>
    <property type="match status" value="1"/>
</dbReference>
<dbReference type="PIRSF" id="PIRSF029792">
    <property type="entry name" value="Pro_racemase"/>
    <property type="match status" value="1"/>
</dbReference>
<dbReference type="SFLD" id="SFLDS00028">
    <property type="entry name" value="Proline_Racemase"/>
    <property type="match status" value="1"/>
</dbReference>
<dbReference type="SUPFAM" id="SSF54506">
    <property type="entry name" value="Diaminopimelate epimerase-like"/>
    <property type="match status" value="1"/>
</dbReference>
<reference key="1">
    <citation type="submission" date="2007-05" db="EMBL/GenBank/DDBJ databases">
        <title>Complete sequence of Pseudomonas putida F1.</title>
        <authorList>
            <consortium name="US DOE Joint Genome Institute"/>
            <person name="Copeland A."/>
            <person name="Lucas S."/>
            <person name="Lapidus A."/>
            <person name="Barry K."/>
            <person name="Detter J.C."/>
            <person name="Glavina del Rio T."/>
            <person name="Hammon N."/>
            <person name="Israni S."/>
            <person name="Dalin E."/>
            <person name="Tice H."/>
            <person name="Pitluck S."/>
            <person name="Chain P."/>
            <person name="Malfatti S."/>
            <person name="Shin M."/>
            <person name="Vergez L."/>
            <person name="Schmutz J."/>
            <person name="Larimer F."/>
            <person name="Land M."/>
            <person name="Hauser L."/>
            <person name="Kyrpides N."/>
            <person name="Lykidis A."/>
            <person name="Parales R."/>
            <person name="Richardson P."/>
        </authorList>
    </citation>
    <scope>NUCLEOTIDE SEQUENCE [LARGE SCALE GENOMIC DNA]</scope>
    <source>
        <strain>ATCC 700007 / DSM 6899 / JCM 31910 / BCRC 17059 / LMG 24140 / F1</strain>
    </source>
</reference>
<reference key="2">
    <citation type="journal article" date="2014" name="Elife">
        <title>Prediction and characterization of enzymatic activities guided by sequence similarity and genome neighborhood networks.</title>
        <authorList>
            <person name="Zhao S."/>
            <person name="Sakai A."/>
            <person name="Zhang X."/>
            <person name="Vetting M.W."/>
            <person name="Kumar R."/>
            <person name="Hillerich B."/>
            <person name="San Francisco B."/>
            <person name="Solbiati J."/>
            <person name="Steves A."/>
            <person name="Brown S."/>
            <person name="Akiva E."/>
            <person name="Barber A."/>
            <person name="Seidel R.D."/>
            <person name="Babbitt P.C."/>
            <person name="Almo S.C."/>
            <person name="Gerlt J.A."/>
            <person name="Jacobson M.P."/>
        </authorList>
    </citation>
    <scope>X-RAY CRYSTALLOGRAPHY (1.30 ANGSTROMS)</scope>
    <scope>FUNCTION</scope>
    <scope>CATALYTIC ACTIVITY</scope>
    <scope>BIOPHYSICOCHEMICAL PROPERTIES</scope>
    <source>
        <strain>ATCC 700007 / DSM 6899 / JCM 31910 / BCRC 17059 / LMG 24140 / F1</strain>
    </source>
</reference>